<feature type="chain" id="PRO_0000240020" description="NAD(P)H-quinone oxidoreductase subunit 1, chloroplastic">
    <location>
        <begin position="1"/>
        <end position="363"/>
    </location>
</feature>
<feature type="transmembrane region" description="Helical" evidence="1">
    <location>
        <begin position="30"/>
        <end position="50"/>
    </location>
</feature>
<feature type="transmembrane region" description="Helical" evidence="1">
    <location>
        <begin position="98"/>
        <end position="118"/>
    </location>
</feature>
<feature type="transmembrane region" description="Helical" evidence="1">
    <location>
        <begin position="129"/>
        <end position="149"/>
    </location>
</feature>
<feature type="transmembrane region" description="Helical" evidence="1">
    <location>
        <begin position="248"/>
        <end position="268"/>
    </location>
</feature>
<feature type="transmembrane region" description="Helical" evidence="1">
    <location>
        <begin position="300"/>
        <end position="320"/>
    </location>
</feature>
<feature type="transmembrane region" description="Helical" evidence="1">
    <location>
        <begin position="343"/>
        <end position="363"/>
    </location>
</feature>
<gene>
    <name evidence="1" type="primary">ndhA</name>
</gene>
<geneLocation type="chloroplast"/>
<sequence length="363" mass="40222">MIIYTTEVEDINSFYTLESLKEVYGIIWMLVPILTLVLGITIGVLVIVWLEREISAGIQQRIGPEYAGPLGILQALADGTKLLFKENILPSRGNTRLFSIGPAIAVISILLSFSVIPFSSRLILADLNIGIFLWIAISSIAPVGLLMSGYGSNNKYSFLGGLRAAAQSISYEIPLTLCVLSISLLSNSSSTVDIVEAQSKYGFWGWNLWRQPIGFIVFLISSLAECERLPFDLPEAEEELVAGYQTEYSGIKFGLFYVASYLNLLLSSLFVTVLYLGGWNISIPYVFAPELFEINKINGIIGTTIGIFITLAKTYLFLFISIATRWTLPRLRMDQLLNLGWKFLLPISLGNLLLTTSFQLLSL</sequence>
<protein>
    <recommendedName>
        <fullName evidence="1">NAD(P)H-quinone oxidoreductase subunit 1, chloroplastic</fullName>
        <ecNumber evidence="1">7.1.1.-</ecNumber>
    </recommendedName>
    <alternativeName>
        <fullName evidence="1">NAD(P)H dehydrogenase subunit 1</fullName>
        <shortName evidence="1">NDH subunit 1</shortName>
    </alternativeName>
    <alternativeName>
        <fullName evidence="1">NADH-plastoquinone oxidoreductase subunit 1</fullName>
    </alternativeName>
</protein>
<keyword id="KW-0150">Chloroplast</keyword>
<keyword id="KW-0472">Membrane</keyword>
<keyword id="KW-0520">NAD</keyword>
<keyword id="KW-0521">NADP</keyword>
<keyword id="KW-0934">Plastid</keyword>
<keyword id="KW-0618">Plastoquinone</keyword>
<keyword id="KW-0874">Quinone</keyword>
<keyword id="KW-1185">Reference proteome</keyword>
<keyword id="KW-0793">Thylakoid</keyword>
<keyword id="KW-1278">Translocase</keyword>
<keyword id="KW-0812">Transmembrane</keyword>
<keyword id="KW-1133">Transmembrane helix</keyword>
<organism>
    <name type="scientific">Gossypium hirsutum</name>
    <name type="common">Upland cotton</name>
    <name type="synonym">Gossypium mexicanum</name>
    <dbReference type="NCBI Taxonomy" id="3635"/>
    <lineage>
        <taxon>Eukaryota</taxon>
        <taxon>Viridiplantae</taxon>
        <taxon>Streptophyta</taxon>
        <taxon>Embryophyta</taxon>
        <taxon>Tracheophyta</taxon>
        <taxon>Spermatophyta</taxon>
        <taxon>Magnoliopsida</taxon>
        <taxon>eudicotyledons</taxon>
        <taxon>Gunneridae</taxon>
        <taxon>Pentapetalae</taxon>
        <taxon>rosids</taxon>
        <taxon>malvids</taxon>
        <taxon>Malvales</taxon>
        <taxon>Malvaceae</taxon>
        <taxon>Malvoideae</taxon>
        <taxon>Gossypium</taxon>
    </lineage>
</organism>
<proteinExistence type="inferred from homology"/>
<evidence type="ECO:0000255" key="1">
    <source>
        <dbReference type="HAMAP-Rule" id="MF_01350"/>
    </source>
</evidence>
<dbReference type="EC" id="7.1.1.-" evidence="1"/>
<dbReference type="EMBL" id="DQ345959">
    <property type="protein sequence ID" value="ABC73677.1"/>
    <property type="molecule type" value="Genomic_DNA"/>
</dbReference>
<dbReference type="RefSeq" id="XP_016719339.1">
    <property type="nucleotide sequence ID" value="XM_016863850.1"/>
</dbReference>
<dbReference type="RefSeq" id="YP_538985.1">
    <property type="nucleotide sequence ID" value="NC_007944.1"/>
</dbReference>
<dbReference type="SMR" id="Q2L952"/>
<dbReference type="GeneID" id="3989236"/>
<dbReference type="KEGG" id="ghi:3989236"/>
<dbReference type="OrthoDB" id="57519at41938"/>
<dbReference type="Proteomes" id="UP000189702">
    <property type="component" value="Chloroplast Pltd"/>
</dbReference>
<dbReference type="GO" id="GO:0009535">
    <property type="term" value="C:chloroplast thylakoid membrane"/>
    <property type="evidence" value="ECO:0007669"/>
    <property type="project" value="UniProtKB-SubCell"/>
</dbReference>
<dbReference type="GO" id="GO:0016655">
    <property type="term" value="F:oxidoreductase activity, acting on NAD(P)H, quinone or similar compound as acceptor"/>
    <property type="evidence" value="ECO:0007669"/>
    <property type="project" value="UniProtKB-UniRule"/>
</dbReference>
<dbReference type="GO" id="GO:0048038">
    <property type="term" value="F:quinone binding"/>
    <property type="evidence" value="ECO:0007669"/>
    <property type="project" value="UniProtKB-KW"/>
</dbReference>
<dbReference type="GO" id="GO:0009060">
    <property type="term" value="P:aerobic respiration"/>
    <property type="evidence" value="ECO:0000318"/>
    <property type="project" value="GO_Central"/>
</dbReference>
<dbReference type="GO" id="GO:0019684">
    <property type="term" value="P:photosynthesis, light reaction"/>
    <property type="evidence" value="ECO:0007669"/>
    <property type="project" value="UniProtKB-UniRule"/>
</dbReference>
<dbReference type="HAMAP" id="MF_01350">
    <property type="entry name" value="NDH1_NuoH"/>
    <property type="match status" value="1"/>
</dbReference>
<dbReference type="InterPro" id="IPR001694">
    <property type="entry name" value="NADH_UbQ_OxRdtase_su1/FPO"/>
</dbReference>
<dbReference type="InterPro" id="IPR018086">
    <property type="entry name" value="NADH_UbQ_OxRdtase_su1_CS"/>
</dbReference>
<dbReference type="NCBIfam" id="NF004741">
    <property type="entry name" value="PRK06076.1-2"/>
    <property type="match status" value="1"/>
</dbReference>
<dbReference type="PANTHER" id="PTHR11432">
    <property type="entry name" value="NADH DEHYDROGENASE SUBUNIT 1"/>
    <property type="match status" value="1"/>
</dbReference>
<dbReference type="PANTHER" id="PTHR11432:SF3">
    <property type="entry name" value="NADH-UBIQUINONE OXIDOREDUCTASE CHAIN 1"/>
    <property type="match status" value="1"/>
</dbReference>
<dbReference type="Pfam" id="PF00146">
    <property type="entry name" value="NADHdh"/>
    <property type="match status" value="1"/>
</dbReference>
<dbReference type="PROSITE" id="PS00667">
    <property type="entry name" value="COMPLEX1_ND1_1"/>
    <property type="match status" value="1"/>
</dbReference>
<dbReference type="PROSITE" id="PS00668">
    <property type="entry name" value="COMPLEX1_ND1_2"/>
    <property type="match status" value="1"/>
</dbReference>
<name>NU1C_GOSHI</name>
<accession>Q2L952</accession>
<comment type="function">
    <text evidence="1">NDH shuttles electrons from NAD(P)H:plastoquinone, via FMN and iron-sulfur (Fe-S) centers, to quinones in the photosynthetic chain and possibly in a chloroplast respiratory chain. The immediate electron acceptor for the enzyme in this species is believed to be plastoquinone. Couples the redox reaction to proton translocation, and thus conserves the redox energy in a proton gradient.</text>
</comment>
<comment type="catalytic activity">
    <reaction evidence="1">
        <text>a plastoquinone + NADH + (n+1) H(+)(in) = a plastoquinol + NAD(+) + n H(+)(out)</text>
        <dbReference type="Rhea" id="RHEA:42608"/>
        <dbReference type="Rhea" id="RHEA-COMP:9561"/>
        <dbReference type="Rhea" id="RHEA-COMP:9562"/>
        <dbReference type="ChEBI" id="CHEBI:15378"/>
        <dbReference type="ChEBI" id="CHEBI:17757"/>
        <dbReference type="ChEBI" id="CHEBI:57540"/>
        <dbReference type="ChEBI" id="CHEBI:57945"/>
        <dbReference type="ChEBI" id="CHEBI:62192"/>
    </reaction>
</comment>
<comment type="catalytic activity">
    <reaction evidence="1">
        <text>a plastoquinone + NADPH + (n+1) H(+)(in) = a plastoquinol + NADP(+) + n H(+)(out)</text>
        <dbReference type="Rhea" id="RHEA:42612"/>
        <dbReference type="Rhea" id="RHEA-COMP:9561"/>
        <dbReference type="Rhea" id="RHEA-COMP:9562"/>
        <dbReference type="ChEBI" id="CHEBI:15378"/>
        <dbReference type="ChEBI" id="CHEBI:17757"/>
        <dbReference type="ChEBI" id="CHEBI:57783"/>
        <dbReference type="ChEBI" id="CHEBI:58349"/>
        <dbReference type="ChEBI" id="CHEBI:62192"/>
    </reaction>
</comment>
<comment type="subunit">
    <text evidence="1">NDH is composed of at least 16 different subunits, 5 of which are encoded in the nucleus.</text>
</comment>
<comment type="subcellular location">
    <subcellularLocation>
        <location evidence="1">Plastid</location>
        <location evidence="1">Chloroplast thylakoid membrane</location>
        <topology evidence="1">Multi-pass membrane protein</topology>
    </subcellularLocation>
</comment>
<comment type="similarity">
    <text evidence="1">Belongs to the complex I subunit 1 family.</text>
</comment>
<reference key="1">
    <citation type="journal article" date="2006" name="BMC Genomics">
        <title>The complete chloroplast genome sequence of Gossypium hirsutum: organization and phylogenetic relationships to other angiosperms.</title>
        <authorList>
            <person name="Lee S.-B."/>
            <person name="Kaittanis C."/>
            <person name="Jansen R.K."/>
            <person name="Hostetler J.B."/>
            <person name="Tallon L.J."/>
            <person name="Town C.D."/>
            <person name="Daniell H."/>
        </authorList>
    </citation>
    <scope>NUCLEOTIDE SEQUENCE [LARGE SCALE GENOMIC DNA]</scope>
    <source>
        <strain>cv. Coker 310FR</strain>
    </source>
</reference>